<comment type="function">
    <text evidence="1">Involved in DNA repair and RecF pathway recombination.</text>
</comment>
<comment type="similarity">
    <text evidence="1">Belongs to the RecO family.</text>
</comment>
<name>RECO_PSYIN</name>
<gene>
    <name evidence="1" type="primary">recO</name>
    <name type="ordered locus">Ping_0642</name>
</gene>
<sequence>MSIECHNAFILHRRPYRETSQLIDLFCQDVGKVSLVYKGGRSSTRMRRGTAQPFTLLQVSYFGRGSLKTVKSFEAQTQVVPLVGQRLFLAMYINELLYRLLQAETACDGLFECYQQTLLAIAGAVDPQIALRLFELTLIETLGYGVNFSEDIYSGELIESGYEYQYQHQAGFFAKQAIHKQHDVYSGQDILALAQRDFSNQNVLKSAKRFCRQALANLLGGKPLHSRALFTAK</sequence>
<proteinExistence type="inferred from homology"/>
<keyword id="KW-0227">DNA damage</keyword>
<keyword id="KW-0233">DNA recombination</keyword>
<keyword id="KW-0234">DNA repair</keyword>
<keyword id="KW-1185">Reference proteome</keyword>
<feature type="chain" id="PRO_1000012151" description="DNA repair protein RecO">
    <location>
        <begin position="1"/>
        <end position="233"/>
    </location>
</feature>
<accession>A1SSN0</accession>
<protein>
    <recommendedName>
        <fullName evidence="1">DNA repair protein RecO</fullName>
    </recommendedName>
    <alternativeName>
        <fullName evidence="1">Recombination protein O</fullName>
    </alternativeName>
</protein>
<dbReference type="EMBL" id="CP000510">
    <property type="protein sequence ID" value="ABM02495.1"/>
    <property type="molecule type" value="Genomic_DNA"/>
</dbReference>
<dbReference type="RefSeq" id="WP_011769054.1">
    <property type="nucleotide sequence ID" value="NC_008709.1"/>
</dbReference>
<dbReference type="SMR" id="A1SSN0"/>
<dbReference type="STRING" id="357804.Ping_0642"/>
<dbReference type="KEGG" id="pin:Ping_0642"/>
<dbReference type="eggNOG" id="COG1381">
    <property type="taxonomic scope" value="Bacteria"/>
</dbReference>
<dbReference type="HOGENOM" id="CLU_066645_1_0_6"/>
<dbReference type="OrthoDB" id="9804792at2"/>
<dbReference type="Proteomes" id="UP000000639">
    <property type="component" value="Chromosome"/>
</dbReference>
<dbReference type="GO" id="GO:0043590">
    <property type="term" value="C:bacterial nucleoid"/>
    <property type="evidence" value="ECO:0007669"/>
    <property type="project" value="TreeGrafter"/>
</dbReference>
<dbReference type="GO" id="GO:0006310">
    <property type="term" value="P:DNA recombination"/>
    <property type="evidence" value="ECO:0007669"/>
    <property type="project" value="UniProtKB-UniRule"/>
</dbReference>
<dbReference type="GO" id="GO:0006302">
    <property type="term" value="P:double-strand break repair"/>
    <property type="evidence" value="ECO:0007669"/>
    <property type="project" value="TreeGrafter"/>
</dbReference>
<dbReference type="Gene3D" id="2.40.50.140">
    <property type="entry name" value="Nucleic acid-binding proteins"/>
    <property type="match status" value="1"/>
</dbReference>
<dbReference type="Gene3D" id="1.20.1440.120">
    <property type="entry name" value="Recombination protein O, C-terminal domain"/>
    <property type="match status" value="1"/>
</dbReference>
<dbReference type="HAMAP" id="MF_00201">
    <property type="entry name" value="RecO"/>
    <property type="match status" value="1"/>
</dbReference>
<dbReference type="InterPro" id="IPR037278">
    <property type="entry name" value="ARFGAP/RecO"/>
</dbReference>
<dbReference type="InterPro" id="IPR022572">
    <property type="entry name" value="DNA_rep/recomb_RecO_N"/>
</dbReference>
<dbReference type="InterPro" id="IPR012340">
    <property type="entry name" value="NA-bd_OB-fold"/>
</dbReference>
<dbReference type="InterPro" id="IPR003717">
    <property type="entry name" value="RecO"/>
</dbReference>
<dbReference type="InterPro" id="IPR042242">
    <property type="entry name" value="RecO_C"/>
</dbReference>
<dbReference type="NCBIfam" id="TIGR00613">
    <property type="entry name" value="reco"/>
    <property type="match status" value="1"/>
</dbReference>
<dbReference type="PANTHER" id="PTHR33991">
    <property type="entry name" value="DNA REPAIR PROTEIN RECO"/>
    <property type="match status" value="1"/>
</dbReference>
<dbReference type="PANTHER" id="PTHR33991:SF1">
    <property type="entry name" value="DNA REPAIR PROTEIN RECO"/>
    <property type="match status" value="1"/>
</dbReference>
<dbReference type="Pfam" id="PF02565">
    <property type="entry name" value="RecO_C"/>
    <property type="match status" value="1"/>
</dbReference>
<dbReference type="Pfam" id="PF11967">
    <property type="entry name" value="RecO_N"/>
    <property type="match status" value="1"/>
</dbReference>
<dbReference type="SUPFAM" id="SSF57863">
    <property type="entry name" value="ArfGap/RecO-like zinc finger"/>
    <property type="match status" value="1"/>
</dbReference>
<dbReference type="SUPFAM" id="SSF50249">
    <property type="entry name" value="Nucleic acid-binding proteins"/>
    <property type="match status" value="1"/>
</dbReference>
<evidence type="ECO:0000255" key="1">
    <source>
        <dbReference type="HAMAP-Rule" id="MF_00201"/>
    </source>
</evidence>
<organism>
    <name type="scientific">Psychromonas ingrahamii (strain DSM 17664 / CCUG 51855 / 37)</name>
    <dbReference type="NCBI Taxonomy" id="357804"/>
    <lineage>
        <taxon>Bacteria</taxon>
        <taxon>Pseudomonadati</taxon>
        <taxon>Pseudomonadota</taxon>
        <taxon>Gammaproteobacteria</taxon>
        <taxon>Alteromonadales</taxon>
        <taxon>Psychromonadaceae</taxon>
        <taxon>Psychromonas</taxon>
    </lineage>
</organism>
<reference key="1">
    <citation type="journal article" date="2008" name="BMC Genomics">
        <title>Genomics of an extreme psychrophile, Psychromonas ingrahamii.</title>
        <authorList>
            <person name="Riley M."/>
            <person name="Staley J.T."/>
            <person name="Danchin A."/>
            <person name="Wang T.Z."/>
            <person name="Brettin T.S."/>
            <person name="Hauser L.J."/>
            <person name="Land M.L."/>
            <person name="Thompson L.S."/>
        </authorList>
    </citation>
    <scope>NUCLEOTIDE SEQUENCE [LARGE SCALE GENOMIC DNA]</scope>
    <source>
        <strain>DSM 17664 / CCUG 51855 / 37</strain>
    </source>
</reference>